<sequence length="381" mass="42841">MTNIRKKHPLLKILNEAFVDLPAPSNISSWWNFGSLLGICLMIQILTGLFLAMHYTSDTSTAFSSVTHICRDVNYGWLIRYMHANGASMFFICLFLHVGRGMYYGSYLFMETWNIGIVLLFAMMATAFMGYVLPWGQMSFWGATVITNLLSAIPYIGTTLVEWIWGGFSVDKATLTRFFAFHFILPFIVTALVVVHLLFLHETGSNNPTGINSDADKIPFHPYYTIKDFLGVLILLTVLMILVLFFPDILGDPDNYTPANPLNTPAHIKPEWYFLFAYAILRSIPNKLGGVLALILSILILAALPLVHTSKQRALTFRPFTQALFWILVANLLILTWIGGQPVEHPFIMIGQAASISYFTIIVILMPMAGVIEDSLLKFTH</sequence>
<dbReference type="EMBL" id="AF108706">
    <property type="protein sequence ID" value="AAD45488.1"/>
    <property type="molecule type" value="Genomic_DNA"/>
</dbReference>
<dbReference type="SMR" id="Q9XNU2"/>
<dbReference type="GO" id="GO:0005743">
    <property type="term" value="C:mitochondrial inner membrane"/>
    <property type="evidence" value="ECO:0007669"/>
    <property type="project" value="UniProtKB-SubCell"/>
</dbReference>
<dbReference type="GO" id="GO:0045275">
    <property type="term" value="C:respiratory chain complex III"/>
    <property type="evidence" value="ECO:0007669"/>
    <property type="project" value="InterPro"/>
</dbReference>
<dbReference type="GO" id="GO:0046872">
    <property type="term" value="F:metal ion binding"/>
    <property type="evidence" value="ECO:0007669"/>
    <property type="project" value="UniProtKB-KW"/>
</dbReference>
<dbReference type="GO" id="GO:0008121">
    <property type="term" value="F:ubiquinol-cytochrome-c reductase activity"/>
    <property type="evidence" value="ECO:0007669"/>
    <property type="project" value="InterPro"/>
</dbReference>
<dbReference type="GO" id="GO:0006122">
    <property type="term" value="P:mitochondrial electron transport, ubiquinol to cytochrome c"/>
    <property type="evidence" value="ECO:0007669"/>
    <property type="project" value="TreeGrafter"/>
</dbReference>
<dbReference type="CDD" id="cd00290">
    <property type="entry name" value="cytochrome_b_C"/>
    <property type="match status" value="1"/>
</dbReference>
<dbReference type="CDD" id="cd00284">
    <property type="entry name" value="Cytochrome_b_N"/>
    <property type="match status" value="1"/>
</dbReference>
<dbReference type="FunFam" id="1.20.810.10:FF:000002">
    <property type="entry name" value="Cytochrome b"/>
    <property type="match status" value="1"/>
</dbReference>
<dbReference type="Gene3D" id="1.20.810.10">
    <property type="entry name" value="Cytochrome Bc1 Complex, Chain C"/>
    <property type="match status" value="1"/>
</dbReference>
<dbReference type="InterPro" id="IPR005798">
    <property type="entry name" value="Cyt_b/b6_C"/>
</dbReference>
<dbReference type="InterPro" id="IPR036150">
    <property type="entry name" value="Cyt_b/b6_C_sf"/>
</dbReference>
<dbReference type="InterPro" id="IPR005797">
    <property type="entry name" value="Cyt_b/b6_N"/>
</dbReference>
<dbReference type="InterPro" id="IPR027387">
    <property type="entry name" value="Cytb/b6-like_sf"/>
</dbReference>
<dbReference type="InterPro" id="IPR030689">
    <property type="entry name" value="Cytochrome_b"/>
</dbReference>
<dbReference type="InterPro" id="IPR048260">
    <property type="entry name" value="Cytochrome_b_C_euk/bac"/>
</dbReference>
<dbReference type="InterPro" id="IPR048259">
    <property type="entry name" value="Cytochrome_b_N_euk/bac"/>
</dbReference>
<dbReference type="InterPro" id="IPR016174">
    <property type="entry name" value="Di-haem_cyt_TM"/>
</dbReference>
<dbReference type="PANTHER" id="PTHR19271">
    <property type="entry name" value="CYTOCHROME B"/>
    <property type="match status" value="1"/>
</dbReference>
<dbReference type="PANTHER" id="PTHR19271:SF16">
    <property type="entry name" value="CYTOCHROME B"/>
    <property type="match status" value="1"/>
</dbReference>
<dbReference type="Pfam" id="PF00032">
    <property type="entry name" value="Cytochrom_B_C"/>
    <property type="match status" value="1"/>
</dbReference>
<dbReference type="Pfam" id="PF00033">
    <property type="entry name" value="Cytochrome_B"/>
    <property type="match status" value="1"/>
</dbReference>
<dbReference type="PIRSF" id="PIRSF038885">
    <property type="entry name" value="COB"/>
    <property type="match status" value="1"/>
</dbReference>
<dbReference type="SUPFAM" id="SSF81648">
    <property type="entry name" value="a domain/subunit of cytochrome bc1 complex (Ubiquinol-cytochrome c reductase)"/>
    <property type="match status" value="1"/>
</dbReference>
<dbReference type="SUPFAM" id="SSF81342">
    <property type="entry name" value="Transmembrane di-heme cytochromes"/>
    <property type="match status" value="1"/>
</dbReference>
<dbReference type="PROSITE" id="PS51003">
    <property type="entry name" value="CYTB_CTER"/>
    <property type="match status" value="1"/>
</dbReference>
<dbReference type="PROSITE" id="PS51002">
    <property type="entry name" value="CYTB_NTER"/>
    <property type="match status" value="1"/>
</dbReference>
<keyword id="KW-0249">Electron transport</keyword>
<keyword id="KW-0349">Heme</keyword>
<keyword id="KW-0408">Iron</keyword>
<keyword id="KW-0472">Membrane</keyword>
<keyword id="KW-0479">Metal-binding</keyword>
<keyword id="KW-0496">Mitochondrion</keyword>
<keyword id="KW-0999">Mitochondrion inner membrane</keyword>
<keyword id="KW-0679">Respiratory chain</keyword>
<keyword id="KW-0812">Transmembrane</keyword>
<keyword id="KW-1133">Transmembrane helix</keyword>
<keyword id="KW-0813">Transport</keyword>
<keyword id="KW-0830">Ubiquinone</keyword>
<evidence type="ECO:0000250" key="1"/>
<evidence type="ECO:0000250" key="2">
    <source>
        <dbReference type="UniProtKB" id="P00157"/>
    </source>
</evidence>
<evidence type="ECO:0000255" key="3">
    <source>
        <dbReference type="PROSITE-ProRule" id="PRU00967"/>
    </source>
</evidence>
<evidence type="ECO:0000255" key="4">
    <source>
        <dbReference type="PROSITE-ProRule" id="PRU00968"/>
    </source>
</evidence>
<reference key="1">
    <citation type="journal article" date="1999" name="J. Mammal. Evol.">
        <title>Phylogenetic relationships and the radiation of Sigmodontine rodents in South America: evidence from cytochrome b.</title>
        <authorList>
            <person name="Smith M.F."/>
            <person name="Patton J.L."/>
        </authorList>
    </citation>
    <scope>NUCLEOTIDE SEQUENCE [GENOMIC DNA]</scope>
</reference>
<geneLocation type="mitochondrion"/>
<name>CYB_SCOXE</name>
<proteinExistence type="inferred from homology"/>
<protein>
    <recommendedName>
        <fullName>Cytochrome b</fullName>
    </recommendedName>
    <alternativeName>
        <fullName>Complex III subunit 3</fullName>
    </alternativeName>
    <alternativeName>
        <fullName>Complex III subunit III</fullName>
    </alternativeName>
    <alternativeName>
        <fullName>Cytochrome b-c1 complex subunit 3</fullName>
    </alternativeName>
    <alternativeName>
        <fullName>Ubiquinol-cytochrome-c reductase complex cytochrome b subunit</fullName>
    </alternativeName>
</protein>
<gene>
    <name type="primary">MT-CYB</name>
    <name type="synonym">COB</name>
    <name type="synonym">CYTB</name>
    <name type="synonym">MTCYB</name>
</gene>
<feature type="chain" id="PRO_0000255132" description="Cytochrome b">
    <location>
        <begin position="1"/>
        <end position="381"/>
    </location>
</feature>
<feature type="transmembrane region" description="Helical" evidence="2">
    <location>
        <begin position="33"/>
        <end position="53"/>
    </location>
</feature>
<feature type="transmembrane region" description="Helical" evidence="2">
    <location>
        <begin position="77"/>
        <end position="98"/>
    </location>
</feature>
<feature type="transmembrane region" description="Helical" evidence="2">
    <location>
        <begin position="113"/>
        <end position="133"/>
    </location>
</feature>
<feature type="transmembrane region" description="Helical" evidence="2">
    <location>
        <begin position="178"/>
        <end position="198"/>
    </location>
</feature>
<feature type="transmembrane region" description="Helical" evidence="2">
    <location>
        <begin position="226"/>
        <end position="246"/>
    </location>
</feature>
<feature type="transmembrane region" description="Helical" evidence="2">
    <location>
        <begin position="288"/>
        <end position="308"/>
    </location>
</feature>
<feature type="transmembrane region" description="Helical" evidence="2">
    <location>
        <begin position="320"/>
        <end position="340"/>
    </location>
</feature>
<feature type="transmembrane region" description="Helical" evidence="2">
    <location>
        <begin position="347"/>
        <end position="367"/>
    </location>
</feature>
<feature type="binding site" description="axial binding residue" evidence="2">
    <location>
        <position position="83"/>
    </location>
    <ligand>
        <name>heme b</name>
        <dbReference type="ChEBI" id="CHEBI:60344"/>
        <label>b562</label>
    </ligand>
    <ligandPart>
        <name>Fe</name>
        <dbReference type="ChEBI" id="CHEBI:18248"/>
    </ligandPart>
</feature>
<feature type="binding site" description="axial binding residue" evidence="2">
    <location>
        <position position="97"/>
    </location>
    <ligand>
        <name>heme b</name>
        <dbReference type="ChEBI" id="CHEBI:60344"/>
        <label>b566</label>
    </ligand>
    <ligandPart>
        <name>Fe</name>
        <dbReference type="ChEBI" id="CHEBI:18248"/>
    </ligandPart>
</feature>
<feature type="binding site" description="axial binding residue" evidence="2">
    <location>
        <position position="182"/>
    </location>
    <ligand>
        <name>heme b</name>
        <dbReference type="ChEBI" id="CHEBI:60344"/>
        <label>b562</label>
    </ligand>
    <ligandPart>
        <name>Fe</name>
        <dbReference type="ChEBI" id="CHEBI:18248"/>
    </ligandPart>
</feature>
<feature type="binding site" description="axial binding residue" evidence="2">
    <location>
        <position position="196"/>
    </location>
    <ligand>
        <name>heme b</name>
        <dbReference type="ChEBI" id="CHEBI:60344"/>
        <label>b566</label>
    </ligand>
    <ligandPart>
        <name>Fe</name>
        <dbReference type="ChEBI" id="CHEBI:18248"/>
    </ligandPart>
</feature>
<feature type="binding site" evidence="2">
    <location>
        <position position="201"/>
    </location>
    <ligand>
        <name>a ubiquinone</name>
        <dbReference type="ChEBI" id="CHEBI:16389"/>
    </ligand>
</feature>
<comment type="function">
    <text evidence="2">Component of the ubiquinol-cytochrome c reductase complex (complex III or cytochrome b-c1 complex) that is part of the mitochondrial respiratory chain. The b-c1 complex mediates electron transfer from ubiquinol to cytochrome c. Contributes to the generation of a proton gradient across the mitochondrial membrane that is then used for ATP synthesis.</text>
</comment>
<comment type="cofactor">
    <cofactor evidence="2">
        <name>heme b</name>
        <dbReference type="ChEBI" id="CHEBI:60344"/>
    </cofactor>
    <text evidence="2">Binds 2 heme b groups non-covalently.</text>
</comment>
<comment type="subunit">
    <text evidence="2">The cytochrome bc1 complex contains 11 subunits: 3 respiratory subunits (MT-CYB, CYC1 and UQCRFS1), 2 core proteins (UQCRC1 and UQCRC2) and 6 low-molecular weight proteins (UQCRH/QCR6, UQCRB/QCR7, UQCRQ/QCR8, UQCR10/QCR9, UQCR11/QCR10 and a cleavage product of UQCRFS1). This cytochrome bc1 complex then forms a dimer.</text>
</comment>
<comment type="subcellular location">
    <subcellularLocation>
        <location evidence="2">Mitochondrion inner membrane</location>
        <topology evidence="2">Multi-pass membrane protein</topology>
    </subcellularLocation>
</comment>
<comment type="miscellaneous">
    <text evidence="1">Heme 1 (or BL or b562) is low-potential and absorbs at about 562 nm, and heme 2 (or BH or b566) is high-potential and absorbs at about 566 nm.</text>
</comment>
<comment type="similarity">
    <text evidence="3 4">Belongs to the cytochrome b family.</text>
</comment>
<comment type="caution">
    <text evidence="2">The full-length protein contains only eight transmembrane helices, not nine as predicted by bioinformatics tools.</text>
</comment>
<accession>Q9XNU2</accession>
<organism>
    <name type="scientific">Scotinomys xerampelinus</name>
    <name type="common">Chiriqui brown mouse</name>
    <dbReference type="NCBI Taxonomy" id="89107"/>
    <lineage>
        <taxon>Eukaryota</taxon>
        <taxon>Metazoa</taxon>
        <taxon>Chordata</taxon>
        <taxon>Craniata</taxon>
        <taxon>Vertebrata</taxon>
        <taxon>Euteleostomi</taxon>
        <taxon>Mammalia</taxon>
        <taxon>Eutheria</taxon>
        <taxon>Euarchontoglires</taxon>
        <taxon>Glires</taxon>
        <taxon>Rodentia</taxon>
        <taxon>Myomorpha</taxon>
        <taxon>Muroidea</taxon>
        <taxon>Cricetidae</taxon>
        <taxon>Neotominae</taxon>
        <taxon>Scotinomys</taxon>
    </lineage>
</organism>